<gene>
    <name type="primary">outD</name>
</gene>
<proteinExistence type="inferred from homology"/>
<comment type="function">
    <text evidence="1 2 5">Involved in a type II secretion system (T2SS, formerly general secretion pathway, GSP) for the export of proteins (By similarity). Required for the translocation of the multiple pectic enzymes (Probable). This subunit forms the outer membrane channel (By similarity).</text>
</comment>
<comment type="subunit">
    <text evidence="2">Forms a cylindrical channel with 15 subunits.</text>
</comment>
<comment type="subcellular location">
    <subcellularLocation>
        <location evidence="1">Cell outer membrane</location>
    </subcellularLocation>
    <text evidence="2">Most of the protein is in the periplasm which it traverses to contact proteins of the cell inner membrane.</text>
</comment>
<comment type="domain">
    <text evidence="2">The N0, N1, N2 and N3 domains are periplasmic, while the secretin and S domains form a channel that is partially inserted in the outer membrane. The N1, N2 and N3 domains each form a periplasmic ring. The secretin domain forms a double beta-barrel structure; the outer barrel has a diameter of about 110 Angstroms while the inner barrel forms the central gate with a small pore in the closed state.</text>
</comment>
<comment type="similarity">
    <text evidence="4">Belongs to the bacterial secretin family. GSP D subfamily.</text>
</comment>
<reference key="1">
    <citation type="journal article" date="1993" name="Mol. Microbiol.">
        <title>Molecular cloning and characterization of 13 out genes from Erwinia carotovora subspecies carotovora: genes encoding members of a general secretion pathway (GSP) widespread in Gram-negative bacteria.</title>
        <authorList>
            <person name="Reeves P.J."/>
            <person name="Whitcombe D."/>
            <person name="Wharam S."/>
            <person name="Gibson M."/>
            <person name="Allison G."/>
            <person name="Bunce N."/>
            <person name="Barallon R."/>
            <person name="Douglas P."/>
            <person name="Mulholland V."/>
            <person name="Stevens S."/>
            <person name="Walker S."/>
            <person name="Salmond G.P.C."/>
        </authorList>
    </citation>
    <scope>NUCLEOTIDE SEQUENCE [GENOMIC DNA]</scope>
    <source>
        <strain>SCRI 193</strain>
    </source>
</reference>
<reference key="2">
    <citation type="unpublished observations" date="1997-02">
        <authorList>
            <person name="Bairoch A."/>
        </authorList>
    </citation>
    <scope>IDENTIFICATION OF PROBABLE FRAMESHIFT</scope>
</reference>
<feature type="signal peptide" evidence="3">
    <location>
        <begin position="1"/>
        <end position="18"/>
    </location>
</feature>
<feature type="chain" id="PRO_0000013102" description="Secretin OutD">
    <location>
        <begin position="19"/>
        <end position="650"/>
    </location>
</feature>
<feature type="region of interest" description="N0" evidence="2">
    <location>
        <begin position="20"/>
        <end position="115"/>
    </location>
</feature>
<feature type="region of interest" description="N1" evidence="2">
    <location>
        <begin position="117"/>
        <end position="181"/>
    </location>
</feature>
<feature type="region of interest" description="N2" evidence="2">
    <location>
        <begin position="182"/>
        <end position="255"/>
    </location>
</feature>
<feature type="region of interest" description="N3" evidence="2">
    <location>
        <begin position="258"/>
        <end position="330"/>
    </location>
</feature>
<feature type="region of interest" description="Secretin" evidence="2">
    <location>
        <begin position="335"/>
        <end position="585"/>
    </location>
</feature>
<feature type="region of interest" description="S domain" evidence="2">
    <location>
        <begin position="587"/>
        <end position="650"/>
    </location>
</feature>
<feature type="site" description="May serve as a pivot that allows opening of the central gate for substrate egress" evidence="2">
    <location>
        <position position="447"/>
    </location>
</feature>
<feature type="sequence conflict" description="In Ref. 1; CAA49645." evidence="4" ref="1">
    <original>ELNDNAWRGTCGDYEPANVVVMTGRA</original>
    <variation>VERQRVAWDVWRLRTCERRRDDWPR</variation>
    <location>
        <begin position="139"/>
        <end position="164"/>
    </location>
</feature>
<evidence type="ECO:0000250" key="1">
    <source>
        <dbReference type="UniProtKB" id="E3PJ86"/>
    </source>
</evidence>
<evidence type="ECO:0000250" key="2">
    <source>
        <dbReference type="UniProtKB" id="P45779"/>
    </source>
</evidence>
<evidence type="ECO:0000255" key="3"/>
<evidence type="ECO:0000305" key="4"/>
<evidence type="ECO:0000305" key="5">
    <source>
    </source>
</evidence>
<accession>P31701</accession>
<dbReference type="EMBL" id="X70049">
    <property type="protein sequence ID" value="CAA49645.1"/>
    <property type="molecule type" value="Genomic_DNA"/>
</dbReference>
<dbReference type="PIR" id="S32858">
    <property type="entry name" value="S32858"/>
</dbReference>
<dbReference type="SMR" id="P31701"/>
<dbReference type="GO" id="GO:0009279">
    <property type="term" value="C:cell outer membrane"/>
    <property type="evidence" value="ECO:0007669"/>
    <property type="project" value="UniProtKB-SubCell"/>
</dbReference>
<dbReference type="GO" id="GO:0015627">
    <property type="term" value="C:type II protein secretion system complex"/>
    <property type="evidence" value="ECO:0007669"/>
    <property type="project" value="InterPro"/>
</dbReference>
<dbReference type="GO" id="GO:0015628">
    <property type="term" value="P:protein secretion by the type II secretion system"/>
    <property type="evidence" value="ECO:0007669"/>
    <property type="project" value="InterPro"/>
</dbReference>
<dbReference type="Gene3D" id="3.30.1370.120">
    <property type="match status" value="3"/>
</dbReference>
<dbReference type="InterPro" id="IPR050810">
    <property type="entry name" value="Bact_Secretion_Sys_Channel"/>
</dbReference>
<dbReference type="InterPro" id="IPR049371">
    <property type="entry name" value="GspD-like_N0"/>
</dbReference>
<dbReference type="InterPro" id="IPR001775">
    <property type="entry name" value="GspD/PilQ"/>
</dbReference>
<dbReference type="InterPro" id="IPR005644">
    <property type="entry name" value="NolW-like"/>
</dbReference>
<dbReference type="InterPro" id="IPR038591">
    <property type="entry name" value="NolW-like_sf"/>
</dbReference>
<dbReference type="InterPro" id="IPR004846">
    <property type="entry name" value="T2SS/T3SS_dom"/>
</dbReference>
<dbReference type="InterPro" id="IPR013356">
    <property type="entry name" value="T2SS_GspD"/>
</dbReference>
<dbReference type="InterPro" id="IPR004845">
    <property type="entry name" value="T2SS_GspD_CS"/>
</dbReference>
<dbReference type="NCBIfam" id="TIGR02517">
    <property type="entry name" value="type_II_gspD"/>
    <property type="match status" value="1"/>
</dbReference>
<dbReference type="PANTHER" id="PTHR30332">
    <property type="entry name" value="PROBABLE GENERAL SECRETION PATHWAY PROTEIN D"/>
    <property type="match status" value="1"/>
</dbReference>
<dbReference type="PANTHER" id="PTHR30332:SF24">
    <property type="entry name" value="SECRETIN GSPD-RELATED"/>
    <property type="match status" value="1"/>
</dbReference>
<dbReference type="Pfam" id="PF00263">
    <property type="entry name" value="Secretin"/>
    <property type="match status" value="1"/>
</dbReference>
<dbReference type="Pfam" id="PF03958">
    <property type="entry name" value="Secretin_N"/>
    <property type="match status" value="3"/>
</dbReference>
<dbReference type="Pfam" id="PF21305">
    <property type="entry name" value="type_II_gspD_N0"/>
    <property type="match status" value="1"/>
</dbReference>
<dbReference type="PRINTS" id="PR00811">
    <property type="entry name" value="BCTERIALGSPD"/>
</dbReference>
<dbReference type="PROSITE" id="PS00875">
    <property type="entry name" value="T2SP_D"/>
    <property type="match status" value="1"/>
</dbReference>
<protein>
    <recommendedName>
        <fullName>Secretin OutD</fullName>
    </recommendedName>
    <alternativeName>
        <fullName>General secretion pathway protein D</fullName>
    </alternativeName>
    <alternativeName>
        <fullName>Pectic enzymes secretion protein OutD</fullName>
    </alternativeName>
    <alternativeName>
        <fullName>Type II secretion system protein D</fullName>
        <shortName>T2SS protein D</shortName>
    </alternativeName>
</protein>
<sequence>MLLLSGSVLLMASSLAWSAEFSASFKGTDIQEFINTVSKNLNKTVIIDPSVSGTITVRSYDMMNEEQYYQFFLSVLDVYGFTVIPMDNNVLKIIRSKDAKSTSMPLATDRQPGIGDEVVTRVVPVNNVAARDFGRSSRELNDNAWRGTCGDYEPANVVVMTGRAGVIHAVMTIVERVDQTGDRNVTTIPLSYASSTEVVKMVNELNKMDEKSALPGMLTANVVADERTNSAAGFGEPNSRQRVIDMVKQLDRQQAVQGNTKVIYLKYAKAADLVEVLTGVGDSIQTDQQNALPALRKDISIKAHEQTNSLIVNAAPDIMRDLEQVIAQLDIRRPQVLVEAIIAEVQDADGMNLGVQWANKNAGVTQFTNTGLPITTMMAGADQFRRDGTLGTAATTALGGFNGIAAGFYQGNWGMLMTALSSNSKNDILATPSIVTLDNMEATFNVGQEVPVLAGSQTTSGDNVFQTVERKTVGIKLKVKPQINEGDSVLLEIEQEVSSVADAASSSSTNLGATFNTRTVNNAVLVSSGDTVVVGGLLDKSTNESANKVPLLGDIPVLGYLFRSNSTETKKRNLMLFIRPSIIRDRSQFQSASASKYHSFSAEENKQRNVSNGEGGLLDNDLLRLPEGGNAYTFRQVQSSIVAFYPAGGK</sequence>
<name>GSPD_PECCC</name>
<keyword id="KW-0998">Cell outer membrane</keyword>
<keyword id="KW-0472">Membrane</keyword>
<keyword id="KW-0653">Protein transport</keyword>
<keyword id="KW-0732">Signal</keyword>
<keyword id="KW-0812">Transmembrane</keyword>
<keyword id="KW-1134">Transmembrane beta strand</keyword>
<keyword id="KW-0813">Transport</keyword>
<organism>
    <name type="scientific">Pectobacterium carotovorum subsp. carotovorum</name>
    <name type="common">Erwinia carotovora subsp. carotovora</name>
    <dbReference type="NCBI Taxonomy" id="555"/>
    <lineage>
        <taxon>Bacteria</taxon>
        <taxon>Pseudomonadati</taxon>
        <taxon>Pseudomonadota</taxon>
        <taxon>Gammaproteobacteria</taxon>
        <taxon>Enterobacterales</taxon>
        <taxon>Pectobacteriaceae</taxon>
        <taxon>Pectobacterium</taxon>
    </lineage>
</organism>